<evidence type="ECO:0000255" key="1">
    <source>
        <dbReference type="HAMAP-Rule" id="MF_00720"/>
    </source>
</evidence>
<sequence>MTNRLVLSGTVCRTPLRKVSPSGIPHCQFVLEHRSVQEEAGFHRQAWCQMPVIVSGHENQAITHSITVGSRITVQGFISCHKAKNGLSKMVLHAEQIELIDSGD</sequence>
<feature type="chain" id="PRO_1000132636" description="Replication restart protein PriB">
    <location>
        <begin position="1"/>
        <end position="104"/>
    </location>
</feature>
<feature type="domain" description="SSB" evidence="1">
    <location>
        <begin position="1"/>
        <end position="101"/>
    </location>
</feature>
<protein>
    <recommendedName>
        <fullName evidence="1">Replication restart protein PriB</fullName>
    </recommendedName>
</protein>
<accession>B2TY74</accession>
<proteinExistence type="inferred from homology"/>
<gene>
    <name evidence="1" type="primary">priB</name>
    <name type="ordered locus">SbBS512_E4734</name>
</gene>
<comment type="function">
    <text evidence="1">Involved in the restart of stalled replication forks, which reloads the replicative helicase on sites other than the origin of replication; the PriA-PriB pathway is the major replication restart pathway. During primosome assembly it facilitates complex formation between PriA and DnaT on DNA; stabilizes PriA on DNA. Stimulates the DNA unwinding activity of PriA helicase.</text>
</comment>
<comment type="subunit">
    <text evidence="1">Homodimer. Interacts with PriA and DnaT. Component of the replication restart primosome. Primosome assembly occurs via a 'hand-off' mechanism. PriA binds to replication forks, subsequently PriB then DnaT bind; DnaT then displaces ssDNA to generate the helicase loading substrate.</text>
</comment>
<comment type="similarity">
    <text evidence="1">Belongs to the PriB family.</text>
</comment>
<name>PRIB_SHIB3</name>
<keyword id="KW-0235">DNA replication</keyword>
<keyword id="KW-0238">DNA-binding</keyword>
<keyword id="KW-0639">Primosome</keyword>
<keyword id="KW-1185">Reference proteome</keyword>
<organism>
    <name type="scientific">Shigella boydii serotype 18 (strain CDC 3083-94 / BS512)</name>
    <dbReference type="NCBI Taxonomy" id="344609"/>
    <lineage>
        <taxon>Bacteria</taxon>
        <taxon>Pseudomonadati</taxon>
        <taxon>Pseudomonadota</taxon>
        <taxon>Gammaproteobacteria</taxon>
        <taxon>Enterobacterales</taxon>
        <taxon>Enterobacteriaceae</taxon>
        <taxon>Shigella</taxon>
    </lineage>
</organism>
<dbReference type="EMBL" id="CP001063">
    <property type="protein sequence ID" value="ACD07055.1"/>
    <property type="molecule type" value="Genomic_DNA"/>
</dbReference>
<dbReference type="RefSeq" id="WP_001296681.1">
    <property type="nucleotide sequence ID" value="NC_010658.1"/>
</dbReference>
<dbReference type="SMR" id="B2TY74"/>
<dbReference type="STRING" id="344609.SbBS512_E4734"/>
<dbReference type="GeneID" id="93777622"/>
<dbReference type="KEGG" id="sbc:SbBS512_E4734"/>
<dbReference type="HOGENOM" id="CLU_166075_0_0_6"/>
<dbReference type="Proteomes" id="UP000001030">
    <property type="component" value="Chromosome"/>
</dbReference>
<dbReference type="GO" id="GO:1990077">
    <property type="term" value="C:primosome complex"/>
    <property type="evidence" value="ECO:0007669"/>
    <property type="project" value="UniProtKB-KW"/>
</dbReference>
<dbReference type="GO" id="GO:0003697">
    <property type="term" value="F:single-stranded DNA binding"/>
    <property type="evidence" value="ECO:0007669"/>
    <property type="project" value="UniProtKB-UniRule"/>
</dbReference>
<dbReference type="GO" id="GO:0006269">
    <property type="term" value="P:DNA replication, synthesis of primer"/>
    <property type="evidence" value="ECO:0007669"/>
    <property type="project" value="UniProtKB-KW"/>
</dbReference>
<dbReference type="CDD" id="cd04496">
    <property type="entry name" value="SSB_OBF"/>
    <property type="match status" value="1"/>
</dbReference>
<dbReference type="FunFam" id="2.40.50.140:FF:000077">
    <property type="entry name" value="Primosomal replication protein N"/>
    <property type="match status" value="1"/>
</dbReference>
<dbReference type="Gene3D" id="2.40.50.140">
    <property type="entry name" value="Nucleic acid-binding proteins"/>
    <property type="match status" value="1"/>
</dbReference>
<dbReference type="HAMAP" id="MF_00720">
    <property type="entry name" value="PriB"/>
    <property type="match status" value="1"/>
</dbReference>
<dbReference type="InterPro" id="IPR012340">
    <property type="entry name" value="NA-bd_OB-fold"/>
</dbReference>
<dbReference type="InterPro" id="IPR000424">
    <property type="entry name" value="Primosome_PriB/ssb"/>
</dbReference>
<dbReference type="InterPro" id="IPR023646">
    <property type="entry name" value="Prisomal_replication_PriB"/>
</dbReference>
<dbReference type="NCBIfam" id="TIGR04418">
    <property type="entry name" value="PriB_gamma"/>
    <property type="match status" value="1"/>
</dbReference>
<dbReference type="Pfam" id="PF22657">
    <property type="entry name" value="SSB_1"/>
    <property type="match status" value="1"/>
</dbReference>
<dbReference type="PIRSF" id="PIRSF003135">
    <property type="entry name" value="Primosomal_n"/>
    <property type="match status" value="1"/>
</dbReference>
<dbReference type="SUPFAM" id="SSF50249">
    <property type="entry name" value="Nucleic acid-binding proteins"/>
    <property type="match status" value="1"/>
</dbReference>
<dbReference type="PROSITE" id="PS50935">
    <property type="entry name" value="SSB"/>
    <property type="match status" value="1"/>
</dbReference>
<reference key="1">
    <citation type="submission" date="2008-05" db="EMBL/GenBank/DDBJ databases">
        <title>Complete sequence of Shigella boydii serotype 18 strain BS512.</title>
        <authorList>
            <person name="Rasko D.A."/>
            <person name="Rosovitz M."/>
            <person name="Maurelli A.T."/>
            <person name="Myers G."/>
            <person name="Seshadri R."/>
            <person name="Cer R."/>
            <person name="Jiang L."/>
            <person name="Ravel J."/>
            <person name="Sebastian Y."/>
        </authorList>
    </citation>
    <scope>NUCLEOTIDE SEQUENCE [LARGE SCALE GENOMIC DNA]</scope>
    <source>
        <strain>CDC 3083-94 / BS512</strain>
    </source>
</reference>